<sequence>MSPNSKGVEILSIGTELLLGNIINTNAQWISEQLSQLGLNHFRQSTVGDNCDRIVRVIQEISKRSNLLITTGGLGPTPDDLTTEAIAKSFNVTLFERPHLWDEIKQKLPNSKLHEDSSSLRKQCFFPKNAQIINNPRGTAPGMIWEPIKGFTILTFPGVPSEMKTMWEETAYDFIQTKFSDTYSFFSNTLKFAGIGESSVAEKINDLLNLKNPTVAPYANLGEVKLRITARAKNEVEAKNIIKPIKEKLKQEFSKFIFGEDNDTLPSILIKELTKRKQTIVFAESCTGGLLSASLTSISGSSQVFQGSIVSYSNELKHLLLDISEEKLAKYGAVSEEVCEAMAINVKKKLRADWAISISGIAGPNGGSQNKPVGLVYISISGPNNYITTIKKQFNSTRNRLEIQTLSVNVCLNSLRLILLSDSK</sequence>
<name>CINAL_PROM0</name>
<evidence type="ECO:0000255" key="1">
    <source>
        <dbReference type="HAMAP-Rule" id="MF_00226"/>
    </source>
</evidence>
<reference key="1">
    <citation type="journal article" date="2007" name="PLoS Genet.">
        <title>Patterns and implications of gene gain and loss in the evolution of Prochlorococcus.</title>
        <authorList>
            <person name="Kettler G.C."/>
            <person name="Martiny A.C."/>
            <person name="Huang K."/>
            <person name="Zucker J."/>
            <person name="Coleman M.L."/>
            <person name="Rodrigue S."/>
            <person name="Chen F."/>
            <person name="Lapidus A."/>
            <person name="Ferriera S."/>
            <person name="Johnson J."/>
            <person name="Steglich C."/>
            <person name="Church G.M."/>
            <person name="Richardson P."/>
            <person name="Chisholm S.W."/>
        </authorList>
    </citation>
    <scope>NUCLEOTIDE SEQUENCE [LARGE SCALE GENOMIC DNA]</scope>
    <source>
        <strain>MIT 9301</strain>
    </source>
</reference>
<gene>
    <name type="ordered locus">P9301_02801</name>
</gene>
<accession>A3PAX8</accession>
<proteinExistence type="inferred from homology"/>
<comment type="similarity">
    <text evidence="1">Belongs to the CinA family.</text>
</comment>
<organism>
    <name type="scientific">Prochlorococcus marinus (strain MIT 9301)</name>
    <dbReference type="NCBI Taxonomy" id="167546"/>
    <lineage>
        <taxon>Bacteria</taxon>
        <taxon>Bacillati</taxon>
        <taxon>Cyanobacteriota</taxon>
        <taxon>Cyanophyceae</taxon>
        <taxon>Synechococcales</taxon>
        <taxon>Prochlorococcaceae</taxon>
        <taxon>Prochlorococcus</taxon>
    </lineage>
</organism>
<protein>
    <recommendedName>
        <fullName evidence="1">CinA-like protein</fullName>
    </recommendedName>
</protein>
<feature type="chain" id="PRO_0000336519" description="CinA-like protein">
    <location>
        <begin position="1"/>
        <end position="424"/>
    </location>
</feature>
<keyword id="KW-1185">Reference proteome</keyword>
<dbReference type="EMBL" id="CP000576">
    <property type="protein sequence ID" value="ABO16903.1"/>
    <property type="molecule type" value="Genomic_DNA"/>
</dbReference>
<dbReference type="RefSeq" id="WP_011862298.1">
    <property type="nucleotide sequence ID" value="NC_009091.1"/>
</dbReference>
<dbReference type="SMR" id="A3PAX8"/>
<dbReference type="STRING" id="167546.P9301_02801"/>
<dbReference type="KEGG" id="pmg:P9301_02801"/>
<dbReference type="eggNOG" id="COG1058">
    <property type="taxonomic scope" value="Bacteria"/>
</dbReference>
<dbReference type="eggNOG" id="COG1546">
    <property type="taxonomic scope" value="Bacteria"/>
</dbReference>
<dbReference type="HOGENOM" id="CLU_030805_9_3_3"/>
<dbReference type="OrthoDB" id="9801454at2"/>
<dbReference type="Proteomes" id="UP000001430">
    <property type="component" value="Chromosome"/>
</dbReference>
<dbReference type="CDD" id="cd00885">
    <property type="entry name" value="cinA"/>
    <property type="match status" value="1"/>
</dbReference>
<dbReference type="Gene3D" id="3.30.70.2860">
    <property type="match status" value="1"/>
</dbReference>
<dbReference type="Gene3D" id="3.90.950.20">
    <property type="entry name" value="CinA-like"/>
    <property type="match status" value="1"/>
</dbReference>
<dbReference type="Gene3D" id="3.40.980.10">
    <property type="entry name" value="MoaB/Mog-like domain"/>
    <property type="match status" value="1"/>
</dbReference>
<dbReference type="HAMAP" id="MF_00226_B">
    <property type="entry name" value="CinA_B"/>
    <property type="match status" value="1"/>
</dbReference>
<dbReference type="InterPro" id="IPR050101">
    <property type="entry name" value="CinA"/>
</dbReference>
<dbReference type="InterPro" id="IPR036653">
    <property type="entry name" value="CinA-like_C"/>
</dbReference>
<dbReference type="InterPro" id="IPR008136">
    <property type="entry name" value="CinA_C"/>
</dbReference>
<dbReference type="InterPro" id="IPR041424">
    <property type="entry name" value="CinA_KH"/>
</dbReference>
<dbReference type="InterPro" id="IPR008135">
    <property type="entry name" value="Competence-induced_CinA"/>
</dbReference>
<dbReference type="InterPro" id="IPR036425">
    <property type="entry name" value="MoaB/Mog-like_dom_sf"/>
</dbReference>
<dbReference type="InterPro" id="IPR001453">
    <property type="entry name" value="MoaB/Mog_dom"/>
</dbReference>
<dbReference type="NCBIfam" id="TIGR00200">
    <property type="entry name" value="cinA_nterm"/>
    <property type="match status" value="1"/>
</dbReference>
<dbReference type="NCBIfam" id="TIGR00177">
    <property type="entry name" value="molyb_syn"/>
    <property type="match status" value="1"/>
</dbReference>
<dbReference type="NCBIfam" id="TIGR00199">
    <property type="entry name" value="PncC_domain"/>
    <property type="match status" value="1"/>
</dbReference>
<dbReference type="NCBIfam" id="NF001813">
    <property type="entry name" value="PRK00549.1"/>
    <property type="match status" value="1"/>
</dbReference>
<dbReference type="PANTHER" id="PTHR13939">
    <property type="entry name" value="NICOTINAMIDE-NUCLEOTIDE AMIDOHYDROLASE PNCC"/>
    <property type="match status" value="1"/>
</dbReference>
<dbReference type="PANTHER" id="PTHR13939:SF0">
    <property type="entry name" value="NMN AMIDOHYDROLASE-LIKE PROTEIN YFAY"/>
    <property type="match status" value="1"/>
</dbReference>
<dbReference type="Pfam" id="PF02464">
    <property type="entry name" value="CinA"/>
    <property type="match status" value="1"/>
</dbReference>
<dbReference type="Pfam" id="PF18146">
    <property type="entry name" value="CinA_KH"/>
    <property type="match status" value="1"/>
</dbReference>
<dbReference type="Pfam" id="PF00994">
    <property type="entry name" value="MoCF_biosynth"/>
    <property type="match status" value="1"/>
</dbReference>
<dbReference type="PIRSF" id="PIRSF006728">
    <property type="entry name" value="CinA"/>
    <property type="match status" value="1"/>
</dbReference>
<dbReference type="SMART" id="SM00852">
    <property type="entry name" value="MoCF_biosynth"/>
    <property type="match status" value="1"/>
</dbReference>
<dbReference type="SUPFAM" id="SSF142433">
    <property type="entry name" value="CinA-like"/>
    <property type="match status" value="1"/>
</dbReference>
<dbReference type="SUPFAM" id="SSF53218">
    <property type="entry name" value="Molybdenum cofactor biosynthesis proteins"/>
    <property type="match status" value="1"/>
</dbReference>